<reference key="1">
    <citation type="journal article" date="2001" name="Nature">
        <title>Genome sequence of enterohaemorrhagic Escherichia coli O157:H7.</title>
        <authorList>
            <person name="Perna N.T."/>
            <person name="Plunkett G. III"/>
            <person name="Burland V."/>
            <person name="Mau B."/>
            <person name="Glasner J.D."/>
            <person name="Rose D.J."/>
            <person name="Mayhew G.F."/>
            <person name="Evans P.S."/>
            <person name="Gregor J."/>
            <person name="Kirkpatrick H.A."/>
            <person name="Posfai G."/>
            <person name="Hackett J."/>
            <person name="Klink S."/>
            <person name="Boutin A."/>
            <person name="Shao Y."/>
            <person name="Miller L."/>
            <person name="Grotbeck E.J."/>
            <person name="Davis N.W."/>
            <person name="Lim A."/>
            <person name="Dimalanta E.T."/>
            <person name="Potamousis K."/>
            <person name="Apodaca J."/>
            <person name="Anantharaman T.S."/>
            <person name="Lin J."/>
            <person name="Yen G."/>
            <person name="Schwartz D.C."/>
            <person name="Welch R.A."/>
            <person name="Blattner F.R."/>
        </authorList>
    </citation>
    <scope>NUCLEOTIDE SEQUENCE [LARGE SCALE GENOMIC DNA]</scope>
    <source>
        <strain>O157:H7 / EDL933 / ATCC 700927 / EHEC</strain>
    </source>
</reference>
<reference key="2">
    <citation type="journal article" date="2001" name="DNA Res.">
        <title>Complete genome sequence of enterohemorrhagic Escherichia coli O157:H7 and genomic comparison with a laboratory strain K-12.</title>
        <authorList>
            <person name="Hayashi T."/>
            <person name="Makino K."/>
            <person name="Ohnishi M."/>
            <person name="Kurokawa K."/>
            <person name="Ishii K."/>
            <person name="Yokoyama K."/>
            <person name="Han C.-G."/>
            <person name="Ohtsubo E."/>
            <person name="Nakayama K."/>
            <person name="Murata T."/>
            <person name="Tanaka M."/>
            <person name="Tobe T."/>
            <person name="Iida T."/>
            <person name="Takami H."/>
            <person name="Honda T."/>
            <person name="Sasakawa C."/>
            <person name="Ogasawara N."/>
            <person name="Yasunaga T."/>
            <person name="Kuhara S."/>
            <person name="Shiba T."/>
            <person name="Hattori M."/>
            <person name="Shinagawa H."/>
        </authorList>
    </citation>
    <scope>NUCLEOTIDE SEQUENCE [LARGE SCALE GENOMIC DNA]</scope>
    <source>
        <strain>O157:H7 / Sakai / RIMD 0509952 / EHEC</strain>
    </source>
</reference>
<gene>
    <name type="primary">dppC</name>
    <name type="ordered locus">Z4959</name>
    <name type="ordered locus">ECs4422</name>
</gene>
<accession>P0AEG3</accession>
<accession>P37315</accession>
<feature type="chain" id="PRO_0000060010" description="Dipeptide transport system permease protein DppC">
    <location>
        <begin position="1"/>
        <end position="300"/>
    </location>
</feature>
<feature type="topological domain" description="Cytoplasmic" evidence="2">
    <location>
        <begin position="1"/>
        <end position="31"/>
    </location>
</feature>
<feature type="transmembrane region" description="Helical" evidence="3">
    <location>
        <begin position="32"/>
        <end position="52"/>
    </location>
</feature>
<feature type="topological domain" description="Periplasmic" evidence="2">
    <location>
        <begin position="53"/>
        <end position="101"/>
    </location>
</feature>
<feature type="transmembrane region" description="Helical" evidence="3">
    <location>
        <begin position="102"/>
        <end position="122"/>
    </location>
</feature>
<feature type="topological domain" description="Cytoplasmic" evidence="2">
    <location>
        <begin position="123"/>
        <end position="136"/>
    </location>
</feature>
<feature type="transmembrane region" description="Helical" evidence="3">
    <location>
        <begin position="137"/>
        <end position="157"/>
    </location>
</feature>
<feature type="topological domain" description="Periplasmic" evidence="2">
    <location>
        <begin position="158"/>
        <end position="206"/>
    </location>
</feature>
<feature type="transmembrane region" description="Helical" evidence="3">
    <location>
        <begin position="207"/>
        <end position="227"/>
    </location>
</feature>
<feature type="topological domain" description="Cytoplasmic" evidence="2">
    <location>
        <begin position="228"/>
        <end position="230"/>
    </location>
</feature>
<feature type="transmembrane region" description="Helical" evidence="3">
    <location>
        <begin position="231"/>
        <end position="251"/>
    </location>
</feature>
<feature type="topological domain" description="Periplasmic" evidence="2">
    <location>
        <begin position="252"/>
        <end position="265"/>
    </location>
</feature>
<feature type="transmembrane region" description="Helical" evidence="3">
    <location>
        <begin position="266"/>
        <end position="286"/>
    </location>
</feature>
<feature type="topological domain" description="Cytoplasmic" evidence="2">
    <location>
        <begin position="287"/>
        <end position="300"/>
    </location>
</feature>
<feature type="domain" description="ABC transmembrane type-1" evidence="3">
    <location>
        <begin position="98"/>
        <end position="287"/>
    </location>
</feature>
<keyword id="KW-0997">Cell inner membrane</keyword>
<keyword id="KW-1003">Cell membrane</keyword>
<keyword id="KW-0472">Membrane</keyword>
<keyword id="KW-0571">Peptide transport</keyword>
<keyword id="KW-0653">Protein transport</keyword>
<keyword id="KW-1185">Reference proteome</keyword>
<keyword id="KW-0812">Transmembrane</keyword>
<keyword id="KW-1133">Transmembrane helix</keyword>
<keyword id="KW-0813">Transport</keyword>
<dbReference type="EMBL" id="AE005174">
    <property type="protein sequence ID" value="AAG58686.1"/>
    <property type="molecule type" value="Genomic_DNA"/>
</dbReference>
<dbReference type="EMBL" id="BA000007">
    <property type="protein sequence ID" value="BAB37845.1"/>
    <property type="molecule type" value="Genomic_DNA"/>
</dbReference>
<dbReference type="PIR" id="B86028">
    <property type="entry name" value="B86028"/>
</dbReference>
<dbReference type="PIR" id="F91181">
    <property type="entry name" value="F91181"/>
</dbReference>
<dbReference type="RefSeq" id="NP_312449.1">
    <property type="nucleotide sequence ID" value="NC_002695.1"/>
</dbReference>
<dbReference type="RefSeq" id="WP_000084677.1">
    <property type="nucleotide sequence ID" value="NZ_VOAI01000004.1"/>
</dbReference>
<dbReference type="SMR" id="P0AEG3"/>
<dbReference type="STRING" id="155864.Z4959"/>
<dbReference type="GeneID" id="75201991"/>
<dbReference type="GeneID" id="915715"/>
<dbReference type="KEGG" id="ece:Z4959"/>
<dbReference type="KEGG" id="ecs:ECs_4422"/>
<dbReference type="PATRIC" id="fig|386585.9.peg.4626"/>
<dbReference type="eggNOG" id="COG1173">
    <property type="taxonomic scope" value="Bacteria"/>
</dbReference>
<dbReference type="HOGENOM" id="CLU_028518_1_1_6"/>
<dbReference type="OMA" id="IERAWWV"/>
<dbReference type="Proteomes" id="UP000000558">
    <property type="component" value="Chromosome"/>
</dbReference>
<dbReference type="Proteomes" id="UP000002519">
    <property type="component" value="Chromosome"/>
</dbReference>
<dbReference type="GO" id="GO:0005886">
    <property type="term" value="C:plasma membrane"/>
    <property type="evidence" value="ECO:0007669"/>
    <property type="project" value="UniProtKB-SubCell"/>
</dbReference>
<dbReference type="GO" id="GO:0071916">
    <property type="term" value="F:dipeptide transmembrane transporter activity"/>
    <property type="evidence" value="ECO:0007669"/>
    <property type="project" value="TreeGrafter"/>
</dbReference>
<dbReference type="GO" id="GO:0015031">
    <property type="term" value="P:protein transport"/>
    <property type="evidence" value="ECO:0007669"/>
    <property type="project" value="UniProtKB-KW"/>
</dbReference>
<dbReference type="CDD" id="cd06261">
    <property type="entry name" value="TM_PBP2"/>
    <property type="match status" value="1"/>
</dbReference>
<dbReference type="FunFam" id="1.10.3720.10:FF:000007">
    <property type="entry name" value="Dipeptide ABC transporter permease DppC"/>
    <property type="match status" value="1"/>
</dbReference>
<dbReference type="Gene3D" id="1.10.3720.10">
    <property type="entry name" value="MetI-like"/>
    <property type="match status" value="1"/>
</dbReference>
<dbReference type="InterPro" id="IPR050366">
    <property type="entry name" value="BP-dependent_transpt_permease"/>
</dbReference>
<dbReference type="InterPro" id="IPR000515">
    <property type="entry name" value="MetI-like"/>
</dbReference>
<dbReference type="InterPro" id="IPR035906">
    <property type="entry name" value="MetI-like_sf"/>
</dbReference>
<dbReference type="InterPro" id="IPR025966">
    <property type="entry name" value="OppC_N"/>
</dbReference>
<dbReference type="NCBIfam" id="NF008160">
    <property type="entry name" value="PRK10913.1"/>
    <property type="match status" value="1"/>
</dbReference>
<dbReference type="PANTHER" id="PTHR43386:SF1">
    <property type="entry name" value="D,D-DIPEPTIDE TRANSPORT SYSTEM PERMEASE PROTEIN DDPC-RELATED"/>
    <property type="match status" value="1"/>
</dbReference>
<dbReference type="PANTHER" id="PTHR43386">
    <property type="entry name" value="OLIGOPEPTIDE TRANSPORT SYSTEM PERMEASE PROTEIN APPC"/>
    <property type="match status" value="1"/>
</dbReference>
<dbReference type="Pfam" id="PF00528">
    <property type="entry name" value="BPD_transp_1"/>
    <property type="match status" value="1"/>
</dbReference>
<dbReference type="Pfam" id="PF12911">
    <property type="entry name" value="OppC_N"/>
    <property type="match status" value="1"/>
</dbReference>
<dbReference type="SUPFAM" id="SSF161098">
    <property type="entry name" value="MetI-like"/>
    <property type="match status" value="1"/>
</dbReference>
<dbReference type="PROSITE" id="PS50928">
    <property type="entry name" value="ABC_TM1"/>
    <property type="match status" value="1"/>
</dbReference>
<evidence type="ECO:0000250" key="1">
    <source>
        <dbReference type="UniProtKB" id="P0AEG1"/>
    </source>
</evidence>
<evidence type="ECO:0000255" key="2"/>
<evidence type="ECO:0000255" key="3">
    <source>
        <dbReference type="PROSITE-ProRule" id="PRU00441"/>
    </source>
</evidence>
<evidence type="ECO:0000305" key="4"/>
<protein>
    <recommendedName>
        <fullName evidence="1">Dipeptide transport system permease protein DppC</fullName>
    </recommendedName>
</protein>
<comment type="function">
    <text evidence="1">Part of the ABC transporter DppABCDF involved in dipeptide transport. Responsible for the translocation of the substrate across the membrane.</text>
</comment>
<comment type="subunit">
    <text evidence="1">The complex is composed of two ATP-binding proteins (DppD and DppF), two transmembrane proteins (DppB and DppC) and a solute-binding protein (DppA).</text>
</comment>
<comment type="subcellular location">
    <subcellularLocation>
        <location evidence="1">Cell inner membrane</location>
        <topology evidence="2">Multi-pass membrane protein</topology>
    </subcellularLocation>
</comment>
<comment type="similarity">
    <text evidence="4">Belongs to the binding-protein-dependent transport system permease family. OppBC subfamily.</text>
</comment>
<organism>
    <name type="scientific">Escherichia coli O157:H7</name>
    <dbReference type="NCBI Taxonomy" id="83334"/>
    <lineage>
        <taxon>Bacteria</taxon>
        <taxon>Pseudomonadati</taxon>
        <taxon>Pseudomonadota</taxon>
        <taxon>Gammaproteobacteria</taxon>
        <taxon>Enterobacterales</taxon>
        <taxon>Enterobacteriaceae</taxon>
        <taxon>Escherichia</taxon>
    </lineage>
</organism>
<sequence length="300" mass="32308">MSQVTENKVISAPVPMTPLQEFWHYFKRNKGAVVGLVYVVIVLFIAIFANWIAPYNPAEQFRDALLAPPAWQEGGSMAHLLGTDDVGRDVLSRLMYGARLSLLVGCLVVVLSLIMGVILGLIAGYFGGLVDNIIMRVVDIMLALPSLLLALVLVAIFGPSIGNAALALTFVALPHYVRLTRAAVLVEVNRDYVTASRVAGAGAMRQMFINIFPNCLAPLIVQASLGFSNAILDMAALGFLGMGAQPPTPEWGTMLSDVLQFAQSAWWVVTFPGLAILLTVLAFNLMGDGLRDALDPKLKQ</sequence>
<proteinExistence type="inferred from homology"/>
<name>DPPC_ECO57</name>